<name>TRMB_XANC8</name>
<gene>
    <name evidence="2" type="primary">trmB</name>
    <name type="ordered locus">XC_1014</name>
</gene>
<proteinExistence type="inferred from homology"/>
<sequence length="261" mass="29376">MTDPFTSDGAKMPPKPFTIEEGRRQVRSFVLRQGRFTPAQQRAFDELWPRFGLDYTGAPRDLDAVFGRPAPKVLEIGFGNGAALRFAAQHDPARDYIGIEVHAPGVGRLLNALDDDGATHVRLYHHDAVEVLEREIADGALDEVRIYFPDPWHKKRHNKRRLVQPAFAQLLVRKLRDGGRLHAATDWADYAEQMWDVLDATEGLVNRAGPRGHVARPAWRPQTHFETRGQKLGHGVWDLLYDRESGMENRESPGQAPAAPG</sequence>
<feature type="chain" id="PRO_0000229209" description="tRNA (guanine-N(7)-)-methyltransferase">
    <location>
        <begin position="1"/>
        <end position="261"/>
    </location>
</feature>
<feature type="region of interest" description="Interaction with RNA" evidence="2">
    <location>
        <begin position="156"/>
        <end position="161"/>
    </location>
</feature>
<feature type="active site" evidence="1">
    <location>
        <position position="150"/>
    </location>
</feature>
<feature type="binding site" evidence="2">
    <location>
        <position position="75"/>
    </location>
    <ligand>
        <name>S-adenosyl-L-methionine</name>
        <dbReference type="ChEBI" id="CHEBI:59789"/>
    </ligand>
</feature>
<feature type="binding site" evidence="2">
    <location>
        <position position="100"/>
    </location>
    <ligand>
        <name>S-adenosyl-L-methionine</name>
        <dbReference type="ChEBI" id="CHEBI:59789"/>
    </ligand>
</feature>
<feature type="binding site" evidence="2">
    <location>
        <position position="127"/>
    </location>
    <ligand>
        <name>S-adenosyl-L-methionine</name>
        <dbReference type="ChEBI" id="CHEBI:59789"/>
    </ligand>
</feature>
<feature type="binding site" evidence="2">
    <location>
        <position position="150"/>
    </location>
    <ligand>
        <name>S-adenosyl-L-methionine</name>
        <dbReference type="ChEBI" id="CHEBI:59789"/>
    </ligand>
</feature>
<feature type="binding site" evidence="2">
    <location>
        <position position="154"/>
    </location>
    <ligand>
        <name>substrate</name>
    </ligand>
</feature>
<feature type="binding site" evidence="2">
    <location>
        <position position="186"/>
    </location>
    <ligand>
        <name>substrate</name>
    </ligand>
</feature>
<feature type="binding site" evidence="2">
    <location>
        <begin position="223"/>
        <end position="226"/>
    </location>
    <ligand>
        <name>substrate</name>
    </ligand>
</feature>
<comment type="function">
    <text evidence="2">Catalyzes the formation of N(7)-methylguanine at position 46 (m7G46) in tRNA.</text>
</comment>
<comment type="catalytic activity">
    <reaction evidence="2">
        <text>guanosine(46) in tRNA + S-adenosyl-L-methionine = N(7)-methylguanosine(46) in tRNA + S-adenosyl-L-homocysteine</text>
        <dbReference type="Rhea" id="RHEA:42708"/>
        <dbReference type="Rhea" id="RHEA-COMP:10188"/>
        <dbReference type="Rhea" id="RHEA-COMP:10189"/>
        <dbReference type="ChEBI" id="CHEBI:57856"/>
        <dbReference type="ChEBI" id="CHEBI:59789"/>
        <dbReference type="ChEBI" id="CHEBI:74269"/>
        <dbReference type="ChEBI" id="CHEBI:74480"/>
        <dbReference type="EC" id="2.1.1.33"/>
    </reaction>
</comment>
<comment type="pathway">
    <text evidence="2">tRNA modification; N(7)-methylguanine-tRNA biosynthesis.</text>
</comment>
<comment type="similarity">
    <text evidence="2">Belongs to the class I-like SAM-binding methyltransferase superfamily. TrmB family.</text>
</comment>
<evidence type="ECO:0000250" key="1"/>
<evidence type="ECO:0000255" key="2">
    <source>
        <dbReference type="HAMAP-Rule" id="MF_01057"/>
    </source>
</evidence>
<accession>Q4UXY5</accession>
<protein>
    <recommendedName>
        <fullName evidence="2">tRNA (guanine-N(7)-)-methyltransferase</fullName>
        <ecNumber evidence="2">2.1.1.33</ecNumber>
    </recommendedName>
    <alternativeName>
        <fullName evidence="2">tRNA (guanine(46)-N(7))-methyltransferase</fullName>
    </alternativeName>
    <alternativeName>
        <fullName evidence="2">tRNA(m7G46)-methyltransferase</fullName>
    </alternativeName>
</protein>
<keyword id="KW-0489">Methyltransferase</keyword>
<keyword id="KW-0949">S-adenosyl-L-methionine</keyword>
<keyword id="KW-0808">Transferase</keyword>
<keyword id="KW-0819">tRNA processing</keyword>
<reference key="1">
    <citation type="journal article" date="2005" name="Genome Res.">
        <title>Comparative and functional genomic analyses of the pathogenicity of phytopathogen Xanthomonas campestris pv. campestris.</title>
        <authorList>
            <person name="Qian W."/>
            <person name="Jia Y."/>
            <person name="Ren S.-X."/>
            <person name="He Y.-Q."/>
            <person name="Feng J.-X."/>
            <person name="Lu L.-F."/>
            <person name="Sun Q."/>
            <person name="Ying G."/>
            <person name="Tang D.-J."/>
            <person name="Tang H."/>
            <person name="Wu W."/>
            <person name="Hao P."/>
            <person name="Wang L."/>
            <person name="Jiang B.-L."/>
            <person name="Zeng S."/>
            <person name="Gu W.-Y."/>
            <person name="Lu G."/>
            <person name="Rong L."/>
            <person name="Tian Y."/>
            <person name="Yao Z."/>
            <person name="Fu G."/>
            <person name="Chen B."/>
            <person name="Fang R."/>
            <person name="Qiang B."/>
            <person name="Chen Z."/>
            <person name="Zhao G.-P."/>
            <person name="Tang J.-L."/>
            <person name="He C."/>
        </authorList>
    </citation>
    <scope>NUCLEOTIDE SEQUENCE [LARGE SCALE GENOMIC DNA]</scope>
    <source>
        <strain>8004</strain>
    </source>
</reference>
<dbReference type="EC" id="2.1.1.33" evidence="2"/>
<dbReference type="EMBL" id="CP000050">
    <property type="protein sequence ID" value="AAY48088.1"/>
    <property type="molecule type" value="Genomic_DNA"/>
</dbReference>
<dbReference type="RefSeq" id="WP_011038258.1">
    <property type="nucleotide sequence ID" value="NZ_CP155948.1"/>
</dbReference>
<dbReference type="SMR" id="Q4UXY5"/>
<dbReference type="KEGG" id="xcb:XC_1014"/>
<dbReference type="HOGENOM" id="CLU_050910_0_1_6"/>
<dbReference type="UniPathway" id="UPA00989"/>
<dbReference type="Proteomes" id="UP000000420">
    <property type="component" value="Chromosome"/>
</dbReference>
<dbReference type="GO" id="GO:0043527">
    <property type="term" value="C:tRNA methyltransferase complex"/>
    <property type="evidence" value="ECO:0007669"/>
    <property type="project" value="TreeGrafter"/>
</dbReference>
<dbReference type="GO" id="GO:0008176">
    <property type="term" value="F:tRNA (guanine(46)-N7)-methyltransferase activity"/>
    <property type="evidence" value="ECO:0007669"/>
    <property type="project" value="UniProtKB-UniRule"/>
</dbReference>
<dbReference type="CDD" id="cd02440">
    <property type="entry name" value="AdoMet_MTases"/>
    <property type="match status" value="1"/>
</dbReference>
<dbReference type="FunFam" id="3.40.50.150:FF:000035">
    <property type="entry name" value="tRNA (guanine-N(7)-)-methyltransferase"/>
    <property type="match status" value="1"/>
</dbReference>
<dbReference type="Gene3D" id="3.40.50.150">
    <property type="entry name" value="Vaccinia Virus protein VP39"/>
    <property type="match status" value="1"/>
</dbReference>
<dbReference type="HAMAP" id="MF_01057">
    <property type="entry name" value="tRNA_methyltr_TrmB"/>
    <property type="match status" value="1"/>
</dbReference>
<dbReference type="InterPro" id="IPR029063">
    <property type="entry name" value="SAM-dependent_MTases_sf"/>
</dbReference>
<dbReference type="InterPro" id="IPR003358">
    <property type="entry name" value="tRNA_(Gua-N-7)_MeTrfase_Trmb"/>
</dbReference>
<dbReference type="InterPro" id="IPR055361">
    <property type="entry name" value="tRNA_methyltr_TrmB_bact"/>
</dbReference>
<dbReference type="NCBIfam" id="TIGR00091">
    <property type="entry name" value="tRNA (guanosine(46)-N7)-methyltransferase TrmB"/>
    <property type="match status" value="1"/>
</dbReference>
<dbReference type="PANTHER" id="PTHR23417">
    <property type="entry name" value="3-DEOXY-D-MANNO-OCTULOSONIC-ACID TRANSFERASE/TRNA GUANINE-N 7 - -METHYLTRANSFERASE"/>
    <property type="match status" value="1"/>
</dbReference>
<dbReference type="PANTHER" id="PTHR23417:SF14">
    <property type="entry name" value="PENTACOTRIPEPTIDE-REPEAT REGION OF PRORP DOMAIN-CONTAINING PROTEIN"/>
    <property type="match status" value="1"/>
</dbReference>
<dbReference type="Pfam" id="PF02390">
    <property type="entry name" value="Methyltransf_4"/>
    <property type="match status" value="1"/>
</dbReference>
<dbReference type="SUPFAM" id="SSF53335">
    <property type="entry name" value="S-adenosyl-L-methionine-dependent methyltransferases"/>
    <property type="match status" value="1"/>
</dbReference>
<dbReference type="PROSITE" id="PS51625">
    <property type="entry name" value="SAM_MT_TRMB"/>
    <property type="match status" value="1"/>
</dbReference>
<organism>
    <name type="scientific">Xanthomonas campestris pv. campestris (strain 8004)</name>
    <dbReference type="NCBI Taxonomy" id="314565"/>
    <lineage>
        <taxon>Bacteria</taxon>
        <taxon>Pseudomonadati</taxon>
        <taxon>Pseudomonadota</taxon>
        <taxon>Gammaproteobacteria</taxon>
        <taxon>Lysobacterales</taxon>
        <taxon>Lysobacteraceae</taxon>
        <taxon>Xanthomonas</taxon>
    </lineage>
</organism>